<dbReference type="EMBL" id="AF332067">
    <property type="protein sequence ID" value="AAK56095.1"/>
    <property type="molecule type" value="mRNA"/>
</dbReference>
<dbReference type="EMBL" id="AF332068">
    <property type="protein sequence ID" value="AAK56096.1"/>
    <property type="molecule type" value="mRNA"/>
</dbReference>
<dbReference type="EMBL" id="AL663092">
    <property type="status" value="NOT_ANNOTATED_CDS"/>
    <property type="molecule type" value="Genomic_DNA"/>
</dbReference>
<dbReference type="EMBL" id="AL845511">
    <property type="status" value="NOT_ANNOTATED_CDS"/>
    <property type="molecule type" value="Genomic_DNA"/>
</dbReference>
<dbReference type="EMBL" id="CH466551">
    <property type="protein sequence ID" value="EDL06248.1"/>
    <property type="molecule type" value="Genomic_DNA"/>
</dbReference>
<dbReference type="EMBL" id="BC053067">
    <property type="protein sequence ID" value="AAH53067.1"/>
    <property type="molecule type" value="mRNA"/>
</dbReference>
<dbReference type="EMBL" id="AK011692">
    <property type="protein sequence ID" value="BAB27782.1"/>
    <property type="molecule type" value="mRNA"/>
</dbReference>
<dbReference type="CCDS" id="CCDS16983.1"/>
<dbReference type="RefSeq" id="NP_083558.1">
    <property type="nucleotide sequence ID" value="NM_029282.2"/>
</dbReference>
<dbReference type="RefSeq" id="XP_006500395.1">
    <property type="nucleotide sequence ID" value="XM_006500332.2"/>
</dbReference>
<dbReference type="RefSeq" id="XP_011238128.1">
    <property type="nucleotide sequence ID" value="XM_011239826.4"/>
</dbReference>
<dbReference type="SMR" id="Q91V83"/>
<dbReference type="FunCoup" id="Q91V83">
    <property type="interactions" value="2140"/>
</dbReference>
<dbReference type="STRING" id="10090.ENSMUSP00000029179"/>
<dbReference type="iPTMnet" id="Q91V83"/>
<dbReference type="PhosphoSitePlus" id="Q91V83"/>
<dbReference type="jPOST" id="Q91V83"/>
<dbReference type="PaxDb" id="10090-ENSMUSP00000029179"/>
<dbReference type="PeptideAtlas" id="Q91V83"/>
<dbReference type="ProteomicsDB" id="297679"/>
<dbReference type="Pumba" id="Q91V83"/>
<dbReference type="Antibodypedia" id="57267">
    <property type="antibodies" value="122 antibodies from 22 providers"/>
</dbReference>
<dbReference type="DNASU" id="75425"/>
<dbReference type="Ensembl" id="ENSMUST00000029179.11">
    <property type="protein sequence ID" value="ENSMUSP00000029179.5"/>
    <property type="gene ID" value="ENSMUSG00000027650.13"/>
</dbReference>
<dbReference type="Ensembl" id="ENSMUST00000109522.2">
    <property type="protein sequence ID" value="ENSMUSP00000105148.2"/>
    <property type="gene ID" value="ENSMUSG00000027650.13"/>
</dbReference>
<dbReference type="GeneID" id="75425"/>
<dbReference type="KEGG" id="mmu:75425"/>
<dbReference type="UCSC" id="uc008npj.1">
    <property type="organism name" value="mouse"/>
</dbReference>
<dbReference type="AGR" id="MGI:1922675"/>
<dbReference type="CTD" id="9675"/>
<dbReference type="MGI" id="MGI:1922675">
    <property type="gene designation" value="Tti1"/>
</dbReference>
<dbReference type="VEuPathDB" id="HostDB:ENSMUSG00000027650"/>
<dbReference type="eggNOG" id="KOG4524">
    <property type="taxonomic scope" value="Eukaryota"/>
</dbReference>
<dbReference type="GeneTree" id="ENSGT00390000009748"/>
<dbReference type="HOGENOM" id="CLU_004815_0_0_1"/>
<dbReference type="InParanoid" id="Q91V83"/>
<dbReference type="OMA" id="PHPKKPW"/>
<dbReference type="OrthoDB" id="49511at2759"/>
<dbReference type="PhylomeDB" id="Q91V83"/>
<dbReference type="TreeFam" id="TF315296"/>
<dbReference type="BioGRID-ORCS" id="75425">
    <property type="hits" value="20 hits in 60 CRISPR screens"/>
</dbReference>
<dbReference type="ChiTaRS" id="Tti1">
    <property type="organism name" value="mouse"/>
</dbReference>
<dbReference type="PRO" id="PR:Q91V83"/>
<dbReference type="Proteomes" id="UP000000589">
    <property type="component" value="Chromosome 2"/>
</dbReference>
<dbReference type="RNAct" id="Q91V83">
    <property type="molecule type" value="protein"/>
</dbReference>
<dbReference type="Bgee" id="ENSMUSG00000027650">
    <property type="expression patterns" value="Expressed in animal zygote and 249 other cell types or tissues"/>
</dbReference>
<dbReference type="ExpressionAtlas" id="Q91V83">
    <property type="expression patterns" value="baseline and differential"/>
</dbReference>
<dbReference type="GO" id="GO:0005737">
    <property type="term" value="C:cytoplasm"/>
    <property type="evidence" value="ECO:0000250"/>
    <property type="project" value="UniProtKB"/>
</dbReference>
<dbReference type="GO" id="GO:0031931">
    <property type="term" value="C:TORC1 complex"/>
    <property type="evidence" value="ECO:0000250"/>
    <property type="project" value="UniProtKB"/>
</dbReference>
<dbReference type="GO" id="GO:0031932">
    <property type="term" value="C:TORC2 complex"/>
    <property type="evidence" value="ECO:0000250"/>
    <property type="project" value="UniProtKB"/>
</dbReference>
<dbReference type="GO" id="GO:0110078">
    <property type="term" value="C:TTT Hsp90 cochaperone complex"/>
    <property type="evidence" value="ECO:0007669"/>
    <property type="project" value="Ensembl"/>
</dbReference>
<dbReference type="GO" id="GO:2000003">
    <property type="term" value="P:positive regulation of DNA damage checkpoint"/>
    <property type="evidence" value="ECO:0000250"/>
    <property type="project" value="UniProtKB"/>
</dbReference>
<dbReference type="GO" id="GO:0032006">
    <property type="term" value="P:regulation of TOR signaling"/>
    <property type="evidence" value="ECO:0000250"/>
    <property type="project" value="UniProtKB"/>
</dbReference>
<dbReference type="FunFam" id="1.25.10.10:FF:000229">
    <property type="entry name" value="TELO2-interacting protein 1 homolog"/>
    <property type="match status" value="1"/>
</dbReference>
<dbReference type="FunFam" id="1.25.10.10:FF:000240">
    <property type="entry name" value="TELO2-interacting protein 1 homolog"/>
    <property type="match status" value="1"/>
</dbReference>
<dbReference type="Gene3D" id="1.25.10.10">
    <property type="entry name" value="Leucine-rich Repeat Variant"/>
    <property type="match status" value="2"/>
</dbReference>
<dbReference type="InterPro" id="IPR011989">
    <property type="entry name" value="ARM-like"/>
</dbReference>
<dbReference type="InterPro" id="IPR016024">
    <property type="entry name" value="ARM-type_fold"/>
</dbReference>
<dbReference type="InterPro" id="IPR052587">
    <property type="entry name" value="TELO2-interacting_protein_1"/>
</dbReference>
<dbReference type="InterPro" id="IPR016441">
    <property type="entry name" value="Tti1"/>
</dbReference>
<dbReference type="InterPro" id="IPR049362">
    <property type="entry name" value="TTI1_rpt"/>
</dbReference>
<dbReference type="PANTHER" id="PTHR18460">
    <property type="entry name" value="TEL2 INTERACTING PROTEIN 1 TTI1 FAMILY MEMBER"/>
    <property type="match status" value="1"/>
</dbReference>
<dbReference type="PANTHER" id="PTHR18460:SF3">
    <property type="entry name" value="TELO2-INTERACTING PROTEIN 1 HOMOLOG"/>
    <property type="match status" value="1"/>
</dbReference>
<dbReference type="Pfam" id="PF24176">
    <property type="entry name" value="TPR_TTI1_2nd"/>
    <property type="match status" value="1"/>
</dbReference>
<dbReference type="Pfam" id="PF24181">
    <property type="entry name" value="TPR_TTI1_C"/>
    <property type="match status" value="1"/>
</dbReference>
<dbReference type="Pfam" id="PF24173">
    <property type="entry name" value="TPR_TTI1_N"/>
    <property type="match status" value="1"/>
</dbReference>
<dbReference type="Pfam" id="PF21547">
    <property type="entry name" value="TTI1"/>
    <property type="match status" value="1"/>
</dbReference>
<dbReference type="PIRSF" id="PIRSF005250">
    <property type="entry name" value="UCP005250"/>
    <property type="match status" value="1"/>
</dbReference>
<dbReference type="SUPFAM" id="SSF48371">
    <property type="entry name" value="ARM repeat"/>
    <property type="match status" value="1"/>
</dbReference>
<name>TTI1_MOUSE</name>
<evidence type="ECO:0000250" key="1">
    <source>
        <dbReference type="UniProtKB" id="O43156"/>
    </source>
</evidence>
<evidence type="ECO:0000256" key="2">
    <source>
        <dbReference type="SAM" id="MobiDB-lite"/>
    </source>
</evidence>
<evidence type="ECO:0000305" key="3"/>
<protein>
    <recommendedName>
        <fullName>TELO2-interacting protein 1 homolog</fullName>
    </recommendedName>
</protein>
<feature type="chain" id="PRO_0000050752" description="TELO2-interacting protein 1 homolog">
    <location>
        <begin position="1"/>
        <end position="1085"/>
    </location>
</feature>
<feature type="region of interest" description="Disordered" evidence="2">
    <location>
        <begin position="777"/>
        <end position="799"/>
    </location>
</feature>
<feature type="region of interest" description="Disordered" evidence="2">
    <location>
        <begin position="822"/>
        <end position="847"/>
    </location>
</feature>
<feature type="modified residue" description="Phosphoserine" evidence="1">
    <location>
        <position position="459"/>
    </location>
</feature>
<feature type="modified residue" description="Phosphoserine; by CK2" evidence="1">
    <location>
        <position position="823"/>
    </location>
</feature>
<feature type="sequence conflict" description="In Ref. 1; AAK56095/AAK56096." evidence="3" ref="1">
    <original>A</original>
    <variation>V</variation>
    <location>
        <position position="216"/>
    </location>
</feature>
<comment type="function">
    <text evidence="1">Regulator of the DNA damage response (DDR). Part of the TTT complex that is required to stabilize protein levels of the phosphatidylinositol 3-kinase-related protein kinase (PIKK) family proteins. The TTT complex is involved in the cellular resistance to DNA damage stresses, like ionizing radiation (IR), ultraviolet (UV) and mitomycin C (MMC). Together with the TTT complex and HSP90 may participate in the proper folding of newly synthesized PIKKs. Promotes assembly, stabilizes and maintains the activity of mTORC1 and mTORC2 complexes, which regulate cell growth and survival in response to nutrient and hormonal signals (By similarity).</text>
</comment>
<comment type="subunit">
    <text evidence="1">Component of the TTT complex composed of TELO2, TTI1 and TTI2. Interacts with ATM, ATR, MTOR, PRKDC, SMG1, TELO2, TRRAP and TTI2. Component of the mTORC1 and mTORC2 complexes. Interacts with WAC; WAC positively regulates MTOR activity by promoting the assembly of the TTT complex and the RUVBL complex composed of RUVBL1 and RUVBL2 into the TTT-RUVBL complex which leads to the dimerization of the mTORC1 complex and its subsequent activation.</text>
</comment>
<comment type="subcellular location">
    <subcellularLocation>
        <location evidence="1">Cytoplasm</location>
    </subcellularLocation>
</comment>
<comment type="PTM">
    <text evidence="1">Phosphorylated at Ser-823 by CK2 following growth factor deprivation, leading to its subsequent ubiquitination by the SCF(FBXO9) complex. Phosphorylation by CK2 only takes place when TELO2 is bound to mTORC1, not mTORC2; leading to selective ubiquitination of mTORC1-associated protein (By similarity).</text>
</comment>
<comment type="PTM">
    <text evidence="1">Ubiquitinated by the SCF(FBXO9) complex following phosphorylation by CK2 in response to growth factor deprivation, leading to its degradation by the proteasome. Only mTORC1-associated protein is ubiquitinated and degraded, leading to selective inactivation of mTORC1 to restrain cell growth and protein translation, while mTORC2 is activated due to the relief of feedback inhibition by mTORC1 (By similarity).</text>
</comment>
<comment type="similarity">
    <text evidence="3">Belongs to the tti1 family.</text>
</comment>
<reference key="1">
    <citation type="journal article" date="2001" name="Mamm. Genome">
        <title>High-throughput sequence identification of gene coding variants within alcohol-related QTLs.</title>
        <authorList>
            <person name="Ehringer M.A."/>
            <person name="Thompson J."/>
            <person name="Conroy O."/>
            <person name="Xu Y."/>
            <person name="Yang F."/>
            <person name="Canniff J."/>
            <person name="Beeson M."/>
            <person name="Gordon L."/>
            <person name="Bennett B."/>
            <person name="Johnson T.E."/>
            <person name="Sikela J.M."/>
        </authorList>
    </citation>
    <scope>NUCLEOTIDE SEQUENCE [MRNA]</scope>
    <source>
        <strain>ILS</strain>
        <strain>ISS</strain>
    </source>
</reference>
<reference key="2">
    <citation type="journal article" date="2009" name="PLoS Biol.">
        <title>Lineage-specific biology revealed by a finished genome assembly of the mouse.</title>
        <authorList>
            <person name="Church D.M."/>
            <person name="Goodstadt L."/>
            <person name="Hillier L.W."/>
            <person name="Zody M.C."/>
            <person name="Goldstein S."/>
            <person name="She X."/>
            <person name="Bult C.J."/>
            <person name="Agarwala R."/>
            <person name="Cherry J.L."/>
            <person name="DiCuccio M."/>
            <person name="Hlavina W."/>
            <person name="Kapustin Y."/>
            <person name="Meric P."/>
            <person name="Maglott D."/>
            <person name="Birtle Z."/>
            <person name="Marques A.C."/>
            <person name="Graves T."/>
            <person name="Zhou S."/>
            <person name="Teague B."/>
            <person name="Potamousis K."/>
            <person name="Churas C."/>
            <person name="Place M."/>
            <person name="Herschleb J."/>
            <person name="Runnheim R."/>
            <person name="Forrest D."/>
            <person name="Amos-Landgraf J."/>
            <person name="Schwartz D.C."/>
            <person name="Cheng Z."/>
            <person name="Lindblad-Toh K."/>
            <person name="Eichler E.E."/>
            <person name="Ponting C.P."/>
        </authorList>
    </citation>
    <scope>NUCLEOTIDE SEQUENCE [LARGE SCALE GENOMIC DNA]</scope>
    <source>
        <strain>C57BL/6J</strain>
    </source>
</reference>
<reference key="3">
    <citation type="submission" date="2005-07" db="EMBL/GenBank/DDBJ databases">
        <authorList>
            <person name="Mural R.J."/>
            <person name="Adams M.D."/>
            <person name="Myers E.W."/>
            <person name="Smith H.O."/>
            <person name="Venter J.C."/>
        </authorList>
    </citation>
    <scope>NUCLEOTIDE SEQUENCE [LARGE SCALE GENOMIC DNA]</scope>
</reference>
<reference key="4">
    <citation type="journal article" date="2004" name="Genome Res.">
        <title>The status, quality, and expansion of the NIH full-length cDNA project: the Mammalian Gene Collection (MGC).</title>
        <authorList>
            <consortium name="The MGC Project Team"/>
        </authorList>
    </citation>
    <scope>NUCLEOTIDE SEQUENCE [LARGE SCALE MRNA]</scope>
    <source>
        <strain>C57BL/6J</strain>
        <tissue>Brain</tissue>
    </source>
</reference>
<reference key="5">
    <citation type="submission" date="2009-01" db="UniProtKB">
        <authorList>
            <person name="Lubec G."/>
            <person name="Sunyer B."/>
            <person name="Chen W.-Q."/>
        </authorList>
    </citation>
    <scope>PROTEIN SEQUENCE OF 951-964</scope>
    <scope>IDENTIFICATION BY MASS SPECTROMETRY</scope>
    <source>
        <strain>OF1</strain>
        <tissue>Hippocampus</tissue>
    </source>
</reference>
<reference key="6">
    <citation type="journal article" date="2005" name="Science">
        <title>The transcriptional landscape of the mammalian genome.</title>
        <authorList>
            <person name="Carninci P."/>
            <person name="Kasukawa T."/>
            <person name="Katayama S."/>
            <person name="Gough J."/>
            <person name="Frith M.C."/>
            <person name="Maeda N."/>
            <person name="Oyama R."/>
            <person name="Ravasi T."/>
            <person name="Lenhard B."/>
            <person name="Wells C."/>
            <person name="Kodzius R."/>
            <person name="Shimokawa K."/>
            <person name="Bajic V.B."/>
            <person name="Brenner S.E."/>
            <person name="Batalov S."/>
            <person name="Forrest A.R."/>
            <person name="Zavolan M."/>
            <person name="Davis M.J."/>
            <person name="Wilming L.G."/>
            <person name="Aidinis V."/>
            <person name="Allen J.E."/>
            <person name="Ambesi-Impiombato A."/>
            <person name="Apweiler R."/>
            <person name="Aturaliya R.N."/>
            <person name="Bailey T.L."/>
            <person name="Bansal M."/>
            <person name="Baxter L."/>
            <person name="Beisel K.W."/>
            <person name="Bersano T."/>
            <person name="Bono H."/>
            <person name="Chalk A.M."/>
            <person name="Chiu K.P."/>
            <person name="Choudhary V."/>
            <person name="Christoffels A."/>
            <person name="Clutterbuck D.R."/>
            <person name="Crowe M.L."/>
            <person name="Dalla E."/>
            <person name="Dalrymple B.P."/>
            <person name="de Bono B."/>
            <person name="Della Gatta G."/>
            <person name="di Bernardo D."/>
            <person name="Down T."/>
            <person name="Engstrom P."/>
            <person name="Fagiolini M."/>
            <person name="Faulkner G."/>
            <person name="Fletcher C.F."/>
            <person name="Fukushima T."/>
            <person name="Furuno M."/>
            <person name="Futaki S."/>
            <person name="Gariboldi M."/>
            <person name="Georgii-Hemming P."/>
            <person name="Gingeras T.R."/>
            <person name="Gojobori T."/>
            <person name="Green R.E."/>
            <person name="Gustincich S."/>
            <person name="Harbers M."/>
            <person name="Hayashi Y."/>
            <person name="Hensch T.K."/>
            <person name="Hirokawa N."/>
            <person name="Hill D."/>
            <person name="Huminiecki L."/>
            <person name="Iacono M."/>
            <person name="Ikeo K."/>
            <person name="Iwama A."/>
            <person name="Ishikawa T."/>
            <person name="Jakt M."/>
            <person name="Kanapin A."/>
            <person name="Katoh M."/>
            <person name="Kawasawa Y."/>
            <person name="Kelso J."/>
            <person name="Kitamura H."/>
            <person name="Kitano H."/>
            <person name="Kollias G."/>
            <person name="Krishnan S.P."/>
            <person name="Kruger A."/>
            <person name="Kummerfeld S.K."/>
            <person name="Kurochkin I.V."/>
            <person name="Lareau L.F."/>
            <person name="Lazarevic D."/>
            <person name="Lipovich L."/>
            <person name="Liu J."/>
            <person name="Liuni S."/>
            <person name="McWilliam S."/>
            <person name="Madan Babu M."/>
            <person name="Madera M."/>
            <person name="Marchionni L."/>
            <person name="Matsuda H."/>
            <person name="Matsuzawa S."/>
            <person name="Miki H."/>
            <person name="Mignone F."/>
            <person name="Miyake S."/>
            <person name="Morris K."/>
            <person name="Mottagui-Tabar S."/>
            <person name="Mulder N."/>
            <person name="Nakano N."/>
            <person name="Nakauchi H."/>
            <person name="Ng P."/>
            <person name="Nilsson R."/>
            <person name="Nishiguchi S."/>
            <person name="Nishikawa S."/>
            <person name="Nori F."/>
            <person name="Ohara O."/>
            <person name="Okazaki Y."/>
            <person name="Orlando V."/>
            <person name="Pang K.C."/>
            <person name="Pavan W.J."/>
            <person name="Pavesi G."/>
            <person name="Pesole G."/>
            <person name="Petrovsky N."/>
            <person name="Piazza S."/>
            <person name="Reed J."/>
            <person name="Reid J.F."/>
            <person name="Ring B.Z."/>
            <person name="Ringwald M."/>
            <person name="Rost B."/>
            <person name="Ruan Y."/>
            <person name="Salzberg S.L."/>
            <person name="Sandelin A."/>
            <person name="Schneider C."/>
            <person name="Schoenbach C."/>
            <person name="Sekiguchi K."/>
            <person name="Semple C.A."/>
            <person name="Seno S."/>
            <person name="Sessa L."/>
            <person name="Sheng Y."/>
            <person name="Shibata Y."/>
            <person name="Shimada H."/>
            <person name="Shimada K."/>
            <person name="Silva D."/>
            <person name="Sinclair B."/>
            <person name="Sperling S."/>
            <person name="Stupka E."/>
            <person name="Sugiura K."/>
            <person name="Sultana R."/>
            <person name="Takenaka Y."/>
            <person name="Taki K."/>
            <person name="Tammoja K."/>
            <person name="Tan S.L."/>
            <person name="Tang S."/>
            <person name="Taylor M.S."/>
            <person name="Tegner J."/>
            <person name="Teichmann S.A."/>
            <person name="Ueda H.R."/>
            <person name="van Nimwegen E."/>
            <person name="Verardo R."/>
            <person name="Wei C.L."/>
            <person name="Yagi K."/>
            <person name="Yamanishi H."/>
            <person name="Zabarovsky E."/>
            <person name="Zhu S."/>
            <person name="Zimmer A."/>
            <person name="Hide W."/>
            <person name="Bult C."/>
            <person name="Grimmond S.M."/>
            <person name="Teasdale R.D."/>
            <person name="Liu E.T."/>
            <person name="Brusic V."/>
            <person name="Quackenbush J."/>
            <person name="Wahlestedt C."/>
            <person name="Mattick J.S."/>
            <person name="Hume D.A."/>
            <person name="Kai C."/>
            <person name="Sasaki D."/>
            <person name="Tomaru Y."/>
            <person name="Fukuda S."/>
            <person name="Kanamori-Katayama M."/>
            <person name="Suzuki M."/>
            <person name="Aoki J."/>
            <person name="Arakawa T."/>
            <person name="Iida J."/>
            <person name="Imamura K."/>
            <person name="Itoh M."/>
            <person name="Kato T."/>
            <person name="Kawaji H."/>
            <person name="Kawagashira N."/>
            <person name="Kawashima T."/>
            <person name="Kojima M."/>
            <person name="Kondo S."/>
            <person name="Konno H."/>
            <person name="Nakano K."/>
            <person name="Ninomiya N."/>
            <person name="Nishio T."/>
            <person name="Okada M."/>
            <person name="Plessy C."/>
            <person name="Shibata K."/>
            <person name="Shiraki T."/>
            <person name="Suzuki S."/>
            <person name="Tagami M."/>
            <person name="Waki K."/>
            <person name="Watahiki A."/>
            <person name="Okamura-Oho Y."/>
            <person name="Suzuki H."/>
            <person name="Kawai J."/>
            <person name="Hayashizaki Y."/>
        </authorList>
    </citation>
    <scope>NUCLEOTIDE SEQUENCE [LARGE SCALE MRNA] OF 997-1085</scope>
    <source>
        <strain>C57BL/6J</strain>
        <tissue>Embryo</tissue>
    </source>
</reference>
<reference key="7">
    <citation type="journal article" date="2010" name="Cell">
        <title>A tissue-specific atlas of mouse protein phosphorylation and expression.</title>
        <authorList>
            <person name="Huttlin E.L."/>
            <person name="Jedrychowski M.P."/>
            <person name="Elias J.E."/>
            <person name="Goswami T."/>
            <person name="Rad R."/>
            <person name="Beausoleil S.A."/>
            <person name="Villen J."/>
            <person name="Haas W."/>
            <person name="Sowa M.E."/>
            <person name="Gygi S.P."/>
        </authorList>
    </citation>
    <scope>IDENTIFICATION BY MASS SPECTROMETRY [LARGE SCALE ANALYSIS]</scope>
    <source>
        <tissue>Liver</tissue>
        <tissue>Spleen</tissue>
    </source>
</reference>
<gene>
    <name type="primary">Tti1</name>
</gene>
<organism>
    <name type="scientific">Mus musculus</name>
    <name type="common">Mouse</name>
    <dbReference type="NCBI Taxonomy" id="10090"/>
    <lineage>
        <taxon>Eukaryota</taxon>
        <taxon>Metazoa</taxon>
        <taxon>Chordata</taxon>
        <taxon>Craniata</taxon>
        <taxon>Vertebrata</taxon>
        <taxon>Euteleostomi</taxon>
        <taxon>Mammalia</taxon>
        <taxon>Eutheria</taxon>
        <taxon>Euarchontoglires</taxon>
        <taxon>Glires</taxon>
        <taxon>Rodentia</taxon>
        <taxon>Myomorpha</taxon>
        <taxon>Muroidea</taxon>
        <taxon>Muridae</taxon>
        <taxon>Murinae</taxon>
        <taxon>Mus</taxon>
        <taxon>Mus</taxon>
    </lineage>
</organism>
<keyword id="KW-0963">Cytoplasm</keyword>
<keyword id="KW-0903">Direct protein sequencing</keyword>
<keyword id="KW-0597">Phosphoprotein</keyword>
<keyword id="KW-1185">Reference proteome</keyword>
<keyword id="KW-0832">Ubl conjugation</keyword>
<sequence>MAVFDTPEEAFGVLRPVCVQLTKTQTVENVEHLQTQLQAISDTALQELQQYILFPLRFALKTPGPKRERLVQSVVECLTFVLSSTCVREQELLQELFSELSACLYSPSSQKPAALSEELKLAVIQGLSTLMHSAYRDIILTFYEPSILPRLGFAVSLLLGLAEQEKSKQIKIAALQCLQVLLLQCDCQDHPRPLDELEQQQLGDLLASFLPGISTALTRIITGDFKQGHSIVVSSLKVFYKTVGFIMADEQLTRIPKAQAKPVVEHRVAALMIHREADWVKSTGDKLAIFIKKIIDCVSVHPHWKVRLELVEFVEILLLKCTQSLVESTGPLLKVLVGLVNDESPEVQARCSTVLRRLADQKVVVGSRALADILSESLHSLATSLPRLMNTQDDQGKFSTLSLLLGYLKLLGPKVHVILNSVAHVQRLSRALIQVLELEVTDVKMVEERRWNSDNLSASAEVSAARPWSRVQRRYFRCFTDERVFLLLRKICQLLGYYGDLYLLVDHFMELYHTSVVYRKQAAMILNELVVGAAGLDVEDIHNKCPSMGPEELREIVKSILEEYTSQENWYLITCFEAEEGEEVMMKQQGFQAVTSGVHTCQVVSFPALSKPSPTICSMNSNIWQICIQLEGIGQFAYALGKDFRLLLMSALYPILEKAGDPTLLISQVATSTMVDICHACGYNSVQHLINQNSDYLVNGISLNLRHLALHPHAPKVLEAMLRNADASLLPLVADVVQDVLATLDQFYDKRAASFVSVLHALLAALAHWFPDSGSTGQLQQRSLEEEGRQLPAAGEASTTAEDIEQFVLSYLQEKDVAEGNVSDLEAEEEVQSAPPKVDENDTLPDVEPPLPTHIQIAKDVMERCIHLSADKNLKIRLKVLDVLGLCVEVLQTHKNQLLPLAHRAWPSLVHRLTSDDPLAVLRAFKVLQTLGSRCGDFLRSRFCKDVLPKLTSSLITQAPISARAGPVYSHTLAFKLQLAVLQGLGPLCENLDLGEGDLNKVADACVIYLSTKQPVKLQEAARSVFLHLMRVDPDSTWLLLHELYCPVQQFTAPHPSLHPVQLQGATQPQNPYATNVCHLLLQLQ</sequence>
<accession>Q91V83</accession>
<accession>Q7TS79</accession>
<accession>Q9CSY0</accession>
<proteinExistence type="evidence at protein level"/>